<name>CPFC_MYCA1</name>
<proteinExistence type="inferred from homology"/>
<reference key="1">
    <citation type="submission" date="2006-10" db="EMBL/GenBank/DDBJ databases">
        <authorList>
            <person name="Fleischmann R.D."/>
            <person name="Dodson R.J."/>
            <person name="Haft D.H."/>
            <person name="Merkel J.S."/>
            <person name="Nelson W.C."/>
            <person name="Fraser C.M."/>
        </authorList>
    </citation>
    <scope>NUCLEOTIDE SEQUENCE [LARGE SCALE GENOMIC DNA]</scope>
    <source>
        <strain>104</strain>
    </source>
</reference>
<accession>A0QHT7</accession>
<evidence type="ECO:0000255" key="1">
    <source>
        <dbReference type="HAMAP-Rule" id="MF_00323"/>
    </source>
</evidence>
<keyword id="KW-0963">Cytoplasm</keyword>
<keyword id="KW-0350">Heme biosynthesis</keyword>
<keyword id="KW-0408">Iron</keyword>
<keyword id="KW-0456">Lyase</keyword>
<keyword id="KW-0479">Metal-binding</keyword>
<keyword id="KW-0627">Porphyrin biosynthesis</keyword>
<dbReference type="EC" id="4.99.1.9" evidence="1"/>
<dbReference type="EMBL" id="CP000479">
    <property type="protein sequence ID" value="ABK68245.1"/>
    <property type="molecule type" value="Genomic_DNA"/>
</dbReference>
<dbReference type="RefSeq" id="WP_009977544.1">
    <property type="nucleotide sequence ID" value="NC_008595.1"/>
</dbReference>
<dbReference type="SMR" id="A0QHT7"/>
<dbReference type="KEGG" id="mav:MAV_3293"/>
<dbReference type="HOGENOM" id="CLU_018884_2_0_11"/>
<dbReference type="UniPathway" id="UPA00252"/>
<dbReference type="Proteomes" id="UP000001574">
    <property type="component" value="Chromosome"/>
</dbReference>
<dbReference type="GO" id="GO:0005737">
    <property type="term" value="C:cytoplasm"/>
    <property type="evidence" value="ECO:0007669"/>
    <property type="project" value="UniProtKB-SubCell"/>
</dbReference>
<dbReference type="GO" id="GO:0004325">
    <property type="term" value="F:ferrochelatase activity"/>
    <property type="evidence" value="ECO:0007669"/>
    <property type="project" value="UniProtKB-UniRule"/>
</dbReference>
<dbReference type="GO" id="GO:0046872">
    <property type="term" value="F:metal ion binding"/>
    <property type="evidence" value="ECO:0007669"/>
    <property type="project" value="UniProtKB-KW"/>
</dbReference>
<dbReference type="GO" id="GO:0006783">
    <property type="term" value="P:heme biosynthetic process"/>
    <property type="evidence" value="ECO:0007669"/>
    <property type="project" value="UniProtKB-UniRule"/>
</dbReference>
<dbReference type="CDD" id="cd00419">
    <property type="entry name" value="Ferrochelatase_C"/>
    <property type="match status" value="1"/>
</dbReference>
<dbReference type="CDD" id="cd03411">
    <property type="entry name" value="Ferrochelatase_N"/>
    <property type="match status" value="1"/>
</dbReference>
<dbReference type="Gene3D" id="3.40.50.1400">
    <property type="match status" value="2"/>
</dbReference>
<dbReference type="HAMAP" id="MF_00323">
    <property type="entry name" value="Ferrochelatase"/>
    <property type="match status" value="1"/>
</dbReference>
<dbReference type="InterPro" id="IPR001015">
    <property type="entry name" value="Ferrochelatase"/>
</dbReference>
<dbReference type="InterPro" id="IPR019772">
    <property type="entry name" value="Ferrochelatase_AS"/>
</dbReference>
<dbReference type="InterPro" id="IPR033644">
    <property type="entry name" value="Ferrochelatase_C"/>
</dbReference>
<dbReference type="InterPro" id="IPR033659">
    <property type="entry name" value="Ferrochelatase_N"/>
</dbReference>
<dbReference type="NCBIfam" id="TIGR00109">
    <property type="entry name" value="hemH"/>
    <property type="match status" value="1"/>
</dbReference>
<dbReference type="NCBIfam" id="NF000689">
    <property type="entry name" value="PRK00035.2-1"/>
    <property type="match status" value="1"/>
</dbReference>
<dbReference type="PANTHER" id="PTHR11108">
    <property type="entry name" value="FERROCHELATASE"/>
    <property type="match status" value="1"/>
</dbReference>
<dbReference type="PANTHER" id="PTHR11108:SF1">
    <property type="entry name" value="FERROCHELATASE, MITOCHONDRIAL"/>
    <property type="match status" value="1"/>
</dbReference>
<dbReference type="Pfam" id="PF00762">
    <property type="entry name" value="Ferrochelatase"/>
    <property type="match status" value="1"/>
</dbReference>
<dbReference type="SUPFAM" id="SSF53800">
    <property type="entry name" value="Chelatase"/>
    <property type="match status" value="1"/>
</dbReference>
<dbReference type="PROSITE" id="PS00534">
    <property type="entry name" value="FERROCHELATASE"/>
    <property type="match status" value="1"/>
</dbReference>
<feature type="chain" id="PRO_1000019319" description="Coproporphyrin III ferrochelatase">
    <location>
        <begin position="1"/>
        <end position="336"/>
    </location>
</feature>
<feature type="binding site" evidence="1">
    <location>
        <position position="52"/>
    </location>
    <ligand>
        <name>Fe-coproporphyrin III</name>
        <dbReference type="ChEBI" id="CHEBI:68438"/>
    </ligand>
</feature>
<feature type="binding site" evidence="1">
    <location>
        <position position="116"/>
    </location>
    <ligand>
        <name>Fe-coproporphyrin III</name>
        <dbReference type="ChEBI" id="CHEBI:68438"/>
    </ligand>
</feature>
<feature type="binding site" evidence="1">
    <location>
        <position position="172"/>
    </location>
    <ligand>
        <name>Fe(2+)</name>
        <dbReference type="ChEBI" id="CHEBI:29033"/>
    </ligand>
</feature>
<feature type="binding site" evidence="1">
    <location>
        <position position="255"/>
    </location>
    <ligand>
        <name>Fe(2+)</name>
        <dbReference type="ChEBI" id="CHEBI:29033"/>
    </ligand>
</feature>
<gene>
    <name evidence="1" type="primary">cpfC</name>
    <name type="ordered locus">MAV_3293</name>
</gene>
<sequence>MDFDAVLLLSFGGPEGPEQVRPFLENVTRGRGVPPERLDHVAEHYLHFGGVSPINGINRALIEQLRAAQALPVYFGNRNWEPYVEDTVKVMRDNGIRRAAVFTTSAWSGYSSCTQYVEDIARARAAAGPGAPELVKLRPYFDHPLFVEMFAGAIADAAAKVPAGARLVFTAHSVPVAADERVGPRLYSRQVAYAARLVAAAAGYAEHDLVWQSRSGPPQVRWLEPDVADHLRALAESGTPAVIVCPIGFVADHIEVVWDLDEELRAQAESAGMLMARASTPNAQPRFARLAADLIDELRCGRTPARVTGPDPVPGCLASVNGAPCRPPHCAAQATG</sequence>
<organism>
    <name type="scientific">Mycobacterium avium (strain 104)</name>
    <dbReference type="NCBI Taxonomy" id="243243"/>
    <lineage>
        <taxon>Bacteria</taxon>
        <taxon>Bacillati</taxon>
        <taxon>Actinomycetota</taxon>
        <taxon>Actinomycetes</taxon>
        <taxon>Mycobacteriales</taxon>
        <taxon>Mycobacteriaceae</taxon>
        <taxon>Mycobacterium</taxon>
        <taxon>Mycobacterium avium complex (MAC)</taxon>
    </lineage>
</organism>
<comment type="function">
    <text evidence="1">Involved in coproporphyrin-dependent heme b biosynthesis. Catalyzes the insertion of ferrous iron into coproporphyrin III to form Fe-coproporphyrin III.</text>
</comment>
<comment type="catalytic activity">
    <reaction evidence="1">
        <text>Fe-coproporphyrin III + 2 H(+) = coproporphyrin III + Fe(2+)</text>
        <dbReference type="Rhea" id="RHEA:49572"/>
        <dbReference type="ChEBI" id="CHEBI:15378"/>
        <dbReference type="ChEBI" id="CHEBI:29033"/>
        <dbReference type="ChEBI" id="CHEBI:68438"/>
        <dbReference type="ChEBI" id="CHEBI:131725"/>
        <dbReference type="EC" id="4.99.1.9"/>
    </reaction>
    <physiologicalReaction direction="right-to-left" evidence="1">
        <dbReference type="Rhea" id="RHEA:49574"/>
    </physiologicalReaction>
</comment>
<comment type="pathway">
    <text evidence="1">Porphyrin-containing compound metabolism; protoheme biosynthesis.</text>
</comment>
<comment type="subcellular location">
    <subcellularLocation>
        <location evidence="1">Cytoplasm</location>
    </subcellularLocation>
</comment>
<comment type="similarity">
    <text evidence="1">Belongs to the ferrochelatase family.</text>
</comment>
<protein>
    <recommendedName>
        <fullName evidence="1">Coproporphyrin III ferrochelatase</fullName>
        <ecNumber evidence="1">4.99.1.9</ecNumber>
    </recommendedName>
</protein>